<evidence type="ECO:0000255" key="1">
    <source>
        <dbReference type="HAMAP-Rule" id="MF_01208"/>
    </source>
</evidence>
<feature type="chain" id="PRO_1000066318" description="Orotate phosphoribosyltransferase">
    <location>
        <begin position="1"/>
        <end position="190"/>
    </location>
</feature>
<feature type="binding site" evidence="1">
    <location>
        <position position="101"/>
    </location>
    <ligand>
        <name>5-phospho-alpha-D-ribose 1-diphosphate</name>
        <dbReference type="ChEBI" id="CHEBI:58017"/>
        <note>ligand shared between dimeric partners</note>
    </ligand>
</feature>
<feature type="binding site" description="in other chain" evidence="1">
    <location>
        <position position="102"/>
    </location>
    <ligand>
        <name>5-phospho-alpha-D-ribose 1-diphosphate</name>
        <dbReference type="ChEBI" id="CHEBI:58017"/>
        <note>ligand shared between dimeric partners</note>
    </ligand>
</feature>
<feature type="binding site" evidence="1">
    <location>
        <position position="105"/>
    </location>
    <ligand>
        <name>5-phospho-alpha-D-ribose 1-diphosphate</name>
        <dbReference type="ChEBI" id="CHEBI:58017"/>
        <note>ligand shared between dimeric partners</note>
    </ligand>
</feature>
<feature type="binding site" evidence="1">
    <location>
        <position position="107"/>
    </location>
    <ligand>
        <name>5-phospho-alpha-D-ribose 1-diphosphate</name>
        <dbReference type="ChEBI" id="CHEBI:58017"/>
        <note>ligand shared between dimeric partners</note>
    </ligand>
</feature>
<feature type="binding site" description="in other chain" evidence="1">
    <location>
        <begin position="128"/>
        <end position="136"/>
    </location>
    <ligand>
        <name>5-phospho-alpha-D-ribose 1-diphosphate</name>
        <dbReference type="ChEBI" id="CHEBI:58017"/>
        <note>ligand shared between dimeric partners</note>
    </ligand>
</feature>
<feature type="binding site" evidence="1">
    <location>
        <position position="132"/>
    </location>
    <ligand>
        <name>orotate</name>
        <dbReference type="ChEBI" id="CHEBI:30839"/>
    </ligand>
</feature>
<feature type="binding site" evidence="1">
    <location>
        <position position="160"/>
    </location>
    <ligand>
        <name>orotate</name>
        <dbReference type="ChEBI" id="CHEBI:30839"/>
    </ligand>
</feature>
<protein>
    <recommendedName>
        <fullName evidence="1">Orotate phosphoribosyltransferase</fullName>
        <shortName evidence="1">OPRT</shortName>
        <shortName evidence="1">OPRTase</shortName>
        <ecNumber evidence="1">2.4.2.10</ecNumber>
    </recommendedName>
</protein>
<proteinExistence type="inferred from homology"/>
<comment type="function">
    <text evidence="1">Catalyzes the transfer of a ribosyl phosphate group from 5-phosphoribose 1-diphosphate to orotate, leading to the formation of orotidine monophosphate (OMP).</text>
</comment>
<comment type="catalytic activity">
    <reaction evidence="1">
        <text>orotidine 5'-phosphate + diphosphate = orotate + 5-phospho-alpha-D-ribose 1-diphosphate</text>
        <dbReference type="Rhea" id="RHEA:10380"/>
        <dbReference type="ChEBI" id="CHEBI:30839"/>
        <dbReference type="ChEBI" id="CHEBI:33019"/>
        <dbReference type="ChEBI" id="CHEBI:57538"/>
        <dbReference type="ChEBI" id="CHEBI:58017"/>
        <dbReference type="EC" id="2.4.2.10"/>
    </reaction>
</comment>
<comment type="cofactor">
    <cofactor evidence="1">
        <name>Mg(2+)</name>
        <dbReference type="ChEBI" id="CHEBI:18420"/>
    </cofactor>
</comment>
<comment type="pathway">
    <text evidence="1">Pyrimidine metabolism; UMP biosynthesis via de novo pathway; UMP from orotate: step 1/2.</text>
</comment>
<comment type="subunit">
    <text evidence="1">Homodimer.</text>
</comment>
<comment type="similarity">
    <text evidence="1">Belongs to the purine/pyrimidine phosphoribosyltransferase family. PyrE subfamily.</text>
</comment>
<keyword id="KW-0328">Glycosyltransferase</keyword>
<keyword id="KW-0460">Magnesium</keyword>
<keyword id="KW-0665">Pyrimidine biosynthesis</keyword>
<keyword id="KW-0808">Transferase</keyword>
<accession>Q3AN25</accession>
<gene>
    <name evidence="1" type="primary">pyrE</name>
    <name type="ordered locus">Syncc9605_0231</name>
</gene>
<dbReference type="EC" id="2.4.2.10" evidence="1"/>
<dbReference type="EMBL" id="CP000110">
    <property type="protein sequence ID" value="ABB34007.1"/>
    <property type="molecule type" value="Genomic_DNA"/>
</dbReference>
<dbReference type="RefSeq" id="WP_011363262.1">
    <property type="nucleotide sequence ID" value="NC_007516.1"/>
</dbReference>
<dbReference type="SMR" id="Q3AN25"/>
<dbReference type="STRING" id="110662.Syncc9605_0231"/>
<dbReference type="KEGG" id="syd:Syncc9605_0231"/>
<dbReference type="eggNOG" id="COG0461">
    <property type="taxonomic scope" value="Bacteria"/>
</dbReference>
<dbReference type="HOGENOM" id="CLU_074878_2_1_3"/>
<dbReference type="OrthoDB" id="9785917at2"/>
<dbReference type="UniPathway" id="UPA00070">
    <property type="reaction ID" value="UER00119"/>
</dbReference>
<dbReference type="GO" id="GO:0000287">
    <property type="term" value="F:magnesium ion binding"/>
    <property type="evidence" value="ECO:0007669"/>
    <property type="project" value="UniProtKB-UniRule"/>
</dbReference>
<dbReference type="GO" id="GO:0004588">
    <property type="term" value="F:orotate phosphoribosyltransferase activity"/>
    <property type="evidence" value="ECO:0007669"/>
    <property type="project" value="UniProtKB-UniRule"/>
</dbReference>
<dbReference type="GO" id="GO:0044205">
    <property type="term" value="P:'de novo' UMP biosynthetic process"/>
    <property type="evidence" value="ECO:0007669"/>
    <property type="project" value="UniProtKB-UniRule"/>
</dbReference>
<dbReference type="GO" id="GO:0019856">
    <property type="term" value="P:pyrimidine nucleobase biosynthetic process"/>
    <property type="evidence" value="ECO:0007669"/>
    <property type="project" value="TreeGrafter"/>
</dbReference>
<dbReference type="CDD" id="cd06223">
    <property type="entry name" value="PRTases_typeI"/>
    <property type="match status" value="1"/>
</dbReference>
<dbReference type="FunFam" id="3.40.50.2020:FF:000029">
    <property type="entry name" value="Orotate phosphoribosyltransferase"/>
    <property type="match status" value="1"/>
</dbReference>
<dbReference type="Gene3D" id="3.40.50.2020">
    <property type="match status" value="1"/>
</dbReference>
<dbReference type="HAMAP" id="MF_01208">
    <property type="entry name" value="PyrE"/>
    <property type="match status" value="1"/>
</dbReference>
<dbReference type="InterPro" id="IPR023031">
    <property type="entry name" value="OPRT"/>
</dbReference>
<dbReference type="InterPro" id="IPR004467">
    <property type="entry name" value="Or_phspho_trans_dom"/>
</dbReference>
<dbReference type="InterPro" id="IPR000836">
    <property type="entry name" value="PRibTrfase_dom"/>
</dbReference>
<dbReference type="InterPro" id="IPR029057">
    <property type="entry name" value="PRTase-like"/>
</dbReference>
<dbReference type="NCBIfam" id="TIGR00336">
    <property type="entry name" value="pyrE"/>
    <property type="match status" value="1"/>
</dbReference>
<dbReference type="PANTHER" id="PTHR19278">
    <property type="entry name" value="OROTATE PHOSPHORIBOSYLTRANSFERASE"/>
    <property type="match status" value="1"/>
</dbReference>
<dbReference type="PANTHER" id="PTHR19278:SF9">
    <property type="entry name" value="URIDINE 5'-MONOPHOSPHATE SYNTHASE"/>
    <property type="match status" value="1"/>
</dbReference>
<dbReference type="SUPFAM" id="SSF53271">
    <property type="entry name" value="PRTase-like"/>
    <property type="match status" value="1"/>
</dbReference>
<name>PYRE_SYNSC</name>
<organism>
    <name type="scientific">Synechococcus sp. (strain CC9605)</name>
    <dbReference type="NCBI Taxonomy" id="110662"/>
    <lineage>
        <taxon>Bacteria</taxon>
        <taxon>Bacillati</taxon>
        <taxon>Cyanobacteriota</taxon>
        <taxon>Cyanophyceae</taxon>
        <taxon>Synechococcales</taxon>
        <taxon>Synechococcaceae</taxon>
        <taxon>Synechococcus</taxon>
    </lineage>
</organism>
<sequence length="190" mass="19930">MSESSSVPTEREQLLNRLATLAYRRGDFTLASGRKSEHYVNCKPVSLSGSGLALISRAMLTHVEADARAVAGLTLGADPLVSGVAMAAADQSRELDALIVRKEAKGHGTGAWLEGPLPAPGTLITVLEDVVTTGGSSLKAVRQLRDAGYKVTRVVTIVDREEGGDAAMAADNLELISLYKLSEIAAFVPA</sequence>
<reference key="1">
    <citation type="submission" date="2005-07" db="EMBL/GenBank/DDBJ databases">
        <title>Complete sequence of Synechococcus sp. CC9605.</title>
        <authorList>
            <consortium name="US DOE Joint Genome Institute"/>
            <person name="Copeland A."/>
            <person name="Lucas S."/>
            <person name="Lapidus A."/>
            <person name="Barry K."/>
            <person name="Detter J.C."/>
            <person name="Glavina T."/>
            <person name="Hammon N."/>
            <person name="Israni S."/>
            <person name="Pitluck S."/>
            <person name="Schmutz J."/>
            <person name="Martinez M."/>
            <person name="Larimer F."/>
            <person name="Land M."/>
            <person name="Kyrpides N."/>
            <person name="Ivanova N."/>
            <person name="Richardson P."/>
        </authorList>
    </citation>
    <scope>NUCLEOTIDE SEQUENCE [LARGE SCALE GENOMIC DNA]</scope>
    <source>
        <strain>CC9605</strain>
    </source>
</reference>